<protein>
    <recommendedName>
        <fullName evidence="1">5-keto-4-deoxy-D-glucarate aldolase</fullName>
        <shortName evidence="1">KDGluc aldolase</shortName>
        <shortName evidence="1">KDGlucA</shortName>
        <ecNumber evidence="1">4.1.2.20</ecNumber>
    </recommendedName>
    <alternativeName>
        <fullName evidence="1">2-dehydro-3-deoxy-D-glucarate aldolase</fullName>
    </alternativeName>
    <alternativeName>
        <fullName evidence="1">2-keto-3-deoxy-D-glucarate aldolase</fullName>
    </alternativeName>
    <alternativeName>
        <fullName evidence="1">5-dehydro-4-deoxy-D-glucarate aldolase</fullName>
    </alternativeName>
    <alternativeName>
        <fullName evidence="1">Alpha-keto-beta-deoxy-D-glucarate aldolase</fullName>
    </alternativeName>
</protein>
<organism>
    <name type="scientific">Salmonella dublin (strain CT_02021853)</name>
    <dbReference type="NCBI Taxonomy" id="439851"/>
    <lineage>
        <taxon>Bacteria</taxon>
        <taxon>Pseudomonadati</taxon>
        <taxon>Pseudomonadota</taxon>
        <taxon>Gammaproteobacteria</taxon>
        <taxon>Enterobacterales</taxon>
        <taxon>Enterobacteriaceae</taxon>
        <taxon>Salmonella</taxon>
    </lineage>
</organism>
<feature type="chain" id="PRO_1000140412" description="5-keto-4-deoxy-D-glucarate aldolase">
    <location>
        <begin position="1"/>
        <end position="256"/>
    </location>
</feature>
<feature type="active site" description="Proton acceptor" evidence="1">
    <location>
        <position position="50"/>
    </location>
</feature>
<feature type="binding site" evidence="1">
    <location>
        <position position="151"/>
    </location>
    <ligand>
        <name>substrate</name>
    </ligand>
</feature>
<feature type="binding site" evidence="1">
    <location>
        <position position="153"/>
    </location>
    <ligand>
        <name>Mg(2+)</name>
        <dbReference type="ChEBI" id="CHEBI:18420"/>
    </ligand>
</feature>
<feature type="binding site" evidence="1">
    <location>
        <position position="178"/>
    </location>
    <ligand>
        <name>substrate</name>
    </ligand>
</feature>
<feature type="binding site" evidence="1">
    <location>
        <position position="179"/>
    </location>
    <ligand>
        <name>Mg(2+)</name>
        <dbReference type="ChEBI" id="CHEBI:18420"/>
    </ligand>
</feature>
<feature type="binding site" evidence="1">
    <location>
        <position position="179"/>
    </location>
    <ligand>
        <name>substrate</name>
    </ligand>
</feature>
<feature type="site" description="Transition state stabilizer" evidence="1">
    <location>
        <position position="75"/>
    </location>
</feature>
<feature type="site" description="Increases basicity of active site His" evidence="1">
    <location>
        <position position="89"/>
    </location>
</feature>
<dbReference type="EC" id="4.1.2.20" evidence="1"/>
<dbReference type="EMBL" id="CP001144">
    <property type="protein sequence ID" value="ACH74190.1"/>
    <property type="molecule type" value="Genomic_DNA"/>
</dbReference>
<dbReference type="RefSeq" id="WP_001057715.1">
    <property type="nucleotide sequence ID" value="NC_011205.1"/>
</dbReference>
<dbReference type="SMR" id="B5FHY2"/>
<dbReference type="KEGG" id="sed:SeD_A3608"/>
<dbReference type="HOGENOM" id="CLU_059964_1_0_6"/>
<dbReference type="UniPathway" id="UPA00565">
    <property type="reaction ID" value="UER00630"/>
</dbReference>
<dbReference type="Proteomes" id="UP000008322">
    <property type="component" value="Chromosome"/>
</dbReference>
<dbReference type="GO" id="GO:0005737">
    <property type="term" value="C:cytoplasm"/>
    <property type="evidence" value="ECO:0007669"/>
    <property type="project" value="TreeGrafter"/>
</dbReference>
<dbReference type="GO" id="GO:0008672">
    <property type="term" value="F:2-dehydro-3-deoxyglucarate aldolase activity"/>
    <property type="evidence" value="ECO:0007669"/>
    <property type="project" value="UniProtKB-UniRule"/>
</dbReference>
<dbReference type="GO" id="GO:0000287">
    <property type="term" value="F:magnesium ion binding"/>
    <property type="evidence" value="ECO:0007669"/>
    <property type="project" value="UniProtKB-UniRule"/>
</dbReference>
<dbReference type="GO" id="GO:0042838">
    <property type="term" value="P:D-glucarate catabolic process"/>
    <property type="evidence" value="ECO:0007669"/>
    <property type="project" value="UniProtKB-UniRule"/>
</dbReference>
<dbReference type="GO" id="GO:0046392">
    <property type="term" value="P:galactarate catabolic process"/>
    <property type="evidence" value="ECO:0007669"/>
    <property type="project" value="UniProtKB-UniRule"/>
</dbReference>
<dbReference type="FunFam" id="3.20.20.60:FF:000004">
    <property type="entry name" value="5-keto-4-deoxy-D-glucarate aldolase"/>
    <property type="match status" value="1"/>
</dbReference>
<dbReference type="Gene3D" id="3.20.20.60">
    <property type="entry name" value="Phosphoenolpyruvate-binding domains"/>
    <property type="match status" value="1"/>
</dbReference>
<dbReference type="HAMAP" id="MF_01291">
    <property type="entry name" value="KDGluc_aldolase"/>
    <property type="match status" value="1"/>
</dbReference>
<dbReference type="InterPro" id="IPR005000">
    <property type="entry name" value="Aldolase/citrate-lyase_domain"/>
</dbReference>
<dbReference type="InterPro" id="IPR017648">
    <property type="entry name" value="GarL"/>
</dbReference>
<dbReference type="InterPro" id="IPR050251">
    <property type="entry name" value="HpcH-HpaI_aldolase"/>
</dbReference>
<dbReference type="InterPro" id="IPR015813">
    <property type="entry name" value="Pyrv/PenolPyrv_kinase-like_dom"/>
</dbReference>
<dbReference type="InterPro" id="IPR040442">
    <property type="entry name" value="Pyrv_kinase-like_dom_sf"/>
</dbReference>
<dbReference type="NCBIfam" id="TIGR03239">
    <property type="entry name" value="GarL"/>
    <property type="match status" value="1"/>
</dbReference>
<dbReference type="NCBIfam" id="NF007849">
    <property type="entry name" value="PRK10558.1"/>
    <property type="match status" value="1"/>
</dbReference>
<dbReference type="PANTHER" id="PTHR30502">
    <property type="entry name" value="2-KETO-3-DEOXY-L-RHAMNONATE ALDOLASE"/>
    <property type="match status" value="1"/>
</dbReference>
<dbReference type="PANTHER" id="PTHR30502:SF4">
    <property type="entry name" value="5-KETO-4-DEOXY-D-GLUCARATE ALDOLASE"/>
    <property type="match status" value="1"/>
</dbReference>
<dbReference type="Pfam" id="PF03328">
    <property type="entry name" value="HpcH_HpaI"/>
    <property type="match status" value="1"/>
</dbReference>
<dbReference type="SUPFAM" id="SSF51621">
    <property type="entry name" value="Phosphoenolpyruvate/pyruvate domain"/>
    <property type="match status" value="1"/>
</dbReference>
<comment type="function">
    <text evidence="1">Catalyzes the reversible retro-aldol cleavage of both 5-keto-4-deoxy-D-glucarate and 2-keto-3-deoxy-D-glucarate to pyruvate and tartronic semialdehyde.</text>
</comment>
<comment type="catalytic activity">
    <reaction evidence="1">
        <text>5-dehydro-4-deoxy-D-glucarate = 2-hydroxy-3-oxopropanoate + pyruvate</text>
        <dbReference type="Rhea" id="RHEA:27726"/>
        <dbReference type="ChEBI" id="CHEBI:15361"/>
        <dbReference type="ChEBI" id="CHEBI:42819"/>
        <dbReference type="ChEBI" id="CHEBI:57978"/>
    </reaction>
</comment>
<comment type="catalytic activity">
    <reaction evidence="1">
        <text>2-dehydro-3-deoxy-D-glucarate = 2-hydroxy-3-oxopropanoate + pyruvate</text>
        <dbReference type="Rhea" id="RHEA:10268"/>
        <dbReference type="ChEBI" id="CHEBI:15361"/>
        <dbReference type="ChEBI" id="CHEBI:57978"/>
        <dbReference type="ChEBI" id="CHEBI:58098"/>
        <dbReference type="EC" id="4.1.2.20"/>
    </reaction>
</comment>
<comment type="cofactor">
    <cofactor evidence="1">
        <name>Mg(2+)</name>
        <dbReference type="ChEBI" id="CHEBI:18420"/>
    </cofactor>
    <text evidence="1">Binds 1 Mg(2+) ion per subunit.</text>
</comment>
<comment type="pathway">
    <text evidence="1">Carbohydrate acid metabolism; galactarate degradation; D-glycerate from galactarate: step 2/3.</text>
</comment>
<comment type="subunit">
    <text evidence="1">Homohexamer; trimer of dimers.</text>
</comment>
<comment type="similarity">
    <text evidence="1">Belongs to the HpcH/HpaI aldolase family. KDGluc aldolase subfamily.</text>
</comment>
<gene>
    <name evidence="1" type="primary">garL</name>
    <name type="ordered locus">SeD_A3608</name>
</gene>
<evidence type="ECO:0000255" key="1">
    <source>
        <dbReference type="HAMAP-Rule" id="MF_01291"/>
    </source>
</evidence>
<reference key="1">
    <citation type="journal article" date="2011" name="J. Bacteriol.">
        <title>Comparative genomics of 28 Salmonella enterica isolates: evidence for CRISPR-mediated adaptive sublineage evolution.</title>
        <authorList>
            <person name="Fricke W.F."/>
            <person name="Mammel M.K."/>
            <person name="McDermott P.F."/>
            <person name="Tartera C."/>
            <person name="White D.G."/>
            <person name="Leclerc J.E."/>
            <person name="Ravel J."/>
            <person name="Cebula T.A."/>
        </authorList>
    </citation>
    <scope>NUCLEOTIDE SEQUENCE [LARGE SCALE GENOMIC DNA]</scope>
    <source>
        <strain>CT_02021853</strain>
    </source>
</reference>
<accession>B5FHY2</accession>
<name>GARL_SALDC</name>
<proteinExistence type="inferred from homology"/>
<sequence>MNNAIFPNKFKAALAAQQVQIGCWSALASPITTEVLGLAGFDWLVLDGEHAPNDVTTLIPQLMALKGSASAPVVRVPTNEPVIIKRMLDIGFYNFLIPFVETQEEAARAVASTRYPPEGIRGVSVSHRANMFGTVPDYFAQSNKNITIIVQIESQLGVDNVDAIAATEGVDGIFVGPSDLAAALGHLGNASHPDVQQTIQHIFARAKAHGKPCGILAPVEADARRYLEWGATFVAVGSDLGAFRASTQKLADTFKK</sequence>
<keyword id="KW-0456">Lyase</keyword>
<keyword id="KW-0460">Magnesium</keyword>
<keyword id="KW-0479">Metal-binding</keyword>